<comment type="function">
    <text evidence="1">Catalyzes the phosphorylation of the position 2 hydroxy group of 4-diphosphocytidyl-2C-methyl-D-erythritol.</text>
</comment>
<comment type="catalytic activity">
    <reaction evidence="1">
        <text>4-CDP-2-C-methyl-D-erythritol + ATP = 4-CDP-2-C-methyl-D-erythritol 2-phosphate + ADP + H(+)</text>
        <dbReference type="Rhea" id="RHEA:18437"/>
        <dbReference type="ChEBI" id="CHEBI:15378"/>
        <dbReference type="ChEBI" id="CHEBI:30616"/>
        <dbReference type="ChEBI" id="CHEBI:57823"/>
        <dbReference type="ChEBI" id="CHEBI:57919"/>
        <dbReference type="ChEBI" id="CHEBI:456216"/>
        <dbReference type="EC" id="2.7.1.148"/>
    </reaction>
</comment>
<comment type="pathway">
    <text evidence="1">Isoprenoid biosynthesis; isopentenyl diphosphate biosynthesis via DXP pathway; isopentenyl diphosphate from 1-deoxy-D-xylulose 5-phosphate: step 3/6.</text>
</comment>
<comment type="similarity">
    <text evidence="1">Belongs to the GHMP kinase family. IspE subfamily.</text>
</comment>
<evidence type="ECO:0000255" key="1">
    <source>
        <dbReference type="HAMAP-Rule" id="MF_00061"/>
    </source>
</evidence>
<keyword id="KW-0067">ATP-binding</keyword>
<keyword id="KW-0414">Isoprene biosynthesis</keyword>
<keyword id="KW-0418">Kinase</keyword>
<keyword id="KW-0547">Nucleotide-binding</keyword>
<keyword id="KW-0808">Transferase</keyword>
<dbReference type="EC" id="2.7.1.148" evidence="1"/>
<dbReference type="EMBL" id="CP000753">
    <property type="protein sequence ID" value="ABS09742.1"/>
    <property type="molecule type" value="Genomic_DNA"/>
</dbReference>
<dbReference type="RefSeq" id="WP_012090155.1">
    <property type="nucleotide sequence ID" value="NC_009665.1"/>
</dbReference>
<dbReference type="SMR" id="A6WSF3"/>
<dbReference type="KEGG" id="sbm:Shew185_3617"/>
<dbReference type="HOGENOM" id="CLU_053057_3_0_6"/>
<dbReference type="UniPathway" id="UPA00056">
    <property type="reaction ID" value="UER00094"/>
</dbReference>
<dbReference type="GO" id="GO:0050515">
    <property type="term" value="F:4-(cytidine 5'-diphospho)-2-C-methyl-D-erythritol kinase activity"/>
    <property type="evidence" value="ECO:0007669"/>
    <property type="project" value="UniProtKB-UniRule"/>
</dbReference>
<dbReference type="GO" id="GO:0005524">
    <property type="term" value="F:ATP binding"/>
    <property type="evidence" value="ECO:0007669"/>
    <property type="project" value="UniProtKB-UniRule"/>
</dbReference>
<dbReference type="GO" id="GO:0019288">
    <property type="term" value="P:isopentenyl diphosphate biosynthetic process, methylerythritol 4-phosphate pathway"/>
    <property type="evidence" value="ECO:0007669"/>
    <property type="project" value="UniProtKB-UniRule"/>
</dbReference>
<dbReference type="GO" id="GO:0016114">
    <property type="term" value="P:terpenoid biosynthetic process"/>
    <property type="evidence" value="ECO:0007669"/>
    <property type="project" value="InterPro"/>
</dbReference>
<dbReference type="FunFam" id="3.30.230.10:FF:000022">
    <property type="entry name" value="4-diphosphocytidyl-2-C-methyl-D-erythritol kinase"/>
    <property type="match status" value="1"/>
</dbReference>
<dbReference type="Gene3D" id="3.30.230.10">
    <property type="match status" value="1"/>
</dbReference>
<dbReference type="Gene3D" id="3.30.70.890">
    <property type="entry name" value="GHMP kinase, C-terminal domain"/>
    <property type="match status" value="1"/>
</dbReference>
<dbReference type="HAMAP" id="MF_00061">
    <property type="entry name" value="IspE"/>
    <property type="match status" value="1"/>
</dbReference>
<dbReference type="InterPro" id="IPR013750">
    <property type="entry name" value="GHMP_kinase_C_dom"/>
</dbReference>
<dbReference type="InterPro" id="IPR036554">
    <property type="entry name" value="GHMP_kinase_C_sf"/>
</dbReference>
<dbReference type="InterPro" id="IPR006204">
    <property type="entry name" value="GHMP_kinase_N_dom"/>
</dbReference>
<dbReference type="InterPro" id="IPR004424">
    <property type="entry name" value="IspE"/>
</dbReference>
<dbReference type="InterPro" id="IPR020568">
    <property type="entry name" value="Ribosomal_Su5_D2-typ_SF"/>
</dbReference>
<dbReference type="InterPro" id="IPR014721">
    <property type="entry name" value="Ribsml_uS5_D2-typ_fold_subgr"/>
</dbReference>
<dbReference type="NCBIfam" id="TIGR00154">
    <property type="entry name" value="ispE"/>
    <property type="match status" value="1"/>
</dbReference>
<dbReference type="PANTHER" id="PTHR43527">
    <property type="entry name" value="4-DIPHOSPHOCYTIDYL-2-C-METHYL-D-ERYTHRITOL KINASE, CHLOROPLASTIC"/>
    <property type="match status" value="1"/>
</dbReference>
<dbReference type="PANTHER" id="PTHR43527:SF2">
    <property type="entry name" value="4-DIPHOSPHOCYTIDYL-2-C-METHYL-D-ERYTHRITOL KINASE, CHLOROPLASTIC"/>
    <property type="match status" value="1"/>
</dbReference>
<dbReference type="Pfam" id="PF08544">
    <property type="entry name" value="GHMP_kinases_C"/>
    <property type="match status" value="1"/>
</dbReference>
<dbReference type="Pfam" id="PF00288">
    <property type="entry name" value="GHMP_kinases_N"/>
    <property type="match status" value="1"/>
</dbReference>
<dbReference type="PIRSF" id="PIRSF010376">
    <property type="entry name" value="IspE"/>
    <property type="match status" value="1"/>
</dbReference>
<dbReference type="SUPFAM" id="SSF55060">
    <property type="entry name" value="GHMP Kinase, C-terminal domain"/>
    <property type="match status" value="1"/>
</dbReference>
<dbReference type="SUPFAM" id="SSF54211">
    <property type="entry name" value="Ribosomal protein S5 domain 2-like"/>
    <property type="match status" value="1"/>
</dbReference>
<proteinExistence type="inferred from homology"/>
<gene>
    <name evidence="1" type="primary">ispE</name>
    <name type="ordered locus">Shew185_3617</name>
</gene>
<sequence>MPAAISRNWPAPAKLNLFLHINGRRADGYHELQTLFQFIDCCDMLDFKVTETPELILHSNMSGVVADSDNLILRAAKSLQQTTGFNGGAEIWLDKRLPMGGGLGGGSSDAATTLVALNKLWHTQLSTEELAKIGLKLGADIPVFIHGFAAFAEGVGERLQAVNPGEPWYLVIAPDAHVSTADVFQDPLLPRDTPKLAIDTLMSQPWANDCQKLVVSKYPQVAKALGWLLEYAPSRMTGTGACVFGEFTQQQQALAALAKLPSEMQGFVAQGMNLSPLITRLSHP</sequence>
<accession>A6WSF3</accession>
<feature type="chain" id="PRO_1000007887" description="4-diphosphocytidyl-2-C-methyl-D-erythritol kinase">
    <location>
        <begin position="1"/>
        <end position="284"/>
    </location>
</feature>
<feature type="active site" evidence="1">
    <location>
        <position position="14"/>
    </location>
</feature>
<feature type="active site" evidence="1">
    <location>
        <position position="140"/>
    </location>
</feature>
<feature type="binding site" evidence="1">
    <location>
        <begin position="98"/>
        <end position="108"/>
    </location>
    <ligand>
        <name>ATP</name>
        <dbReference type="ChEBI" id="CHEBI:30616"/>
    </ligand>
</feature>
<protein>
    <recommendedName>
        <fullName evidence="1">4-diphosphocytidyl-2-C-methyl-D-erythritol kinase</fullName>
        <shortName evidence="1">CMK</shortName>
        <ecNumber evidence="1">2.7.1.148</ecNumber>
    </recommendedName>
    <alternativeName>
        <fullName evidence="1">4-(cytidine-5'-diphospho)-2-C-methyl-D-erythritol kinase</fullName>
    </alternativeName>
</protein>
<organism>
    <name type="scientific">Shewanella baltica (strain OS185)</name>
    <dbReference type="NCBI Taxonomy" id="402882"/>
    <lineage>
        <taxon>Bacteria</taxon>
        <taxon>Pseudomonadati</taxon>
        <taxon>Pseudomonadota</taxon>
        <taxon>Gammaproteobacteria</taxon>
        <taxon>Alteromonadales</taxon>
        <taxon>Shewanellaceae</taxon>
        <taxon>Shewanella</taxon>
    </lineage>
</organism>
<reference key="1">
    <citation type="submission" date="2007-07" db="EMBL/GenBank/DDBJ databases">
        <title>Complete sequence of chromosome of Shewanella baltica OS185.</title>
        <authorList>
            <consortium name="US DOE Joint Genome Institute"/>
            <person name="Copeland A."/>
            <person name="Lucas S."/>
            <person name="Lapidus A."/>
            <person name="Barry K."/>
            <person name="Glavina del Rio T."/>
            <person name="Dalin E."/>
            <person name="Tice H."/>
            <person name="Pitluck S."/>
            <person name="Sims D."/>
            <person name="Brettin T."/>
            <person name="Bruce D."/>
            <person name="Detter J.C."/>
            <person name="Han C."/>
            <person name="Schmutz J."/>
            <person name="Larimer F."/>
            <person name="Land M."/>
            <person name="Hauser L."/>
            <person name="Kyrpides N."/>
            <person name="Mikhailova N."/>
            <person name="Brettar I."/>
            <person name="Rodrigues J."/>
            <person name="Konstantinidis K."/>
            <person name="Tiedje J."/>
            <person name="Richardson P."/>
        </authorList>
    </citation>
    <scope>NUCLEOTIDE SEQUENCE [LARGE SCALE GENOMIC DNA]</scope>
    <source>
        <strain>OS185</strain>
    </source>
</reference>
<name>ISPE_SHEB8</name>